<gene>
    <name evidence="1" type="primary">rpl11</name>
    <name type="ordered locus">NEQ101</name>
</gene>
<keyword id="KW-1185">Reference proteome</keyword>
<keyword id="KW-0687">Ribonucleoprotein</keyword>
<keyword id="KW-0689">Ribosomal protein</keyword>
<keyword id="KW-0694">RNA-binding</keyword>
<keyword id="KW-0699">rRNA-binding</keyword>
<comment type="function">
    <text evidence="1">Forms part of the ribosomal stalk which helps the ribosome interact with GTP-bound translation factors.</text>
</comment>
<comment type="subunit">
    <text evidence="1">Part of the ribosomal stalk of the 50S ribosomal subunit. Interacts with L10 and the large rRNA to form the base of the stalk. L10 forms an elongated spine to which L12 dimers bind in a sequential fashion forming a multimeric L10(L12)X complex.</text>
</comment>
<comment type="similarity">
    <text evidence="1">Belongs to the universal ribosomal protein uL11 family.</text>
</comment>
<sequence length="160" mass="17166">MGEIAIRLLVTGGKATPGPPIGPALSPFKINPGKVVAEINKLTKEYEGLPVPVEIIINPETKEYKIIVGLPPTSALLMKAAGVTRGPQRTVHEWVGNVSMKDVVEIAKKKIDSMPTSSLKAAVKSVLGTARATGIKVENKDPKEVTKEVDEGKWDHIINE</sequence>
<accession>P62446</accession>
<reference key="1">
    <citation type="journal article" date="2003" name="Proc. Natl. Acad. Sci. U.S.A.">
        <title>The genome of Nanoarchaeum equitans: insights into early archaeal evolution and derived parasitism.</title>
        <authorList>
            <person name="Waters E."/>
            <person name="Hohn M.J."/>
            <person name="Ahel I."/>
            <person name="Graham D.E."/>
            <person name="Adams M.D."/>
            <person name="Barnstead M."/>
            <person name="Beeson K.Y."/>
            <person name="Bibbs L."/>
            <person name="Bolanos R."/>
            <person name="Keller M."/>
            <person name="Kretz K."/>
            <person name="Lin X."/>
            <person name="Mathur E."/>
            <person name="Ni J."/>
            <person name="Podar M."/>
            <person name="Richardson T."/>
            <person name="Sutton G.G."/>
            <person name="Simon M."/>
            <person name="Soell D."/>
            <person name="Stetter K.O."/>
            <person name="Short J.M."/>
            <person name="Noorderwier M."/>
        </authorList>
    </citation>
    <scope>NUCLEOTIDE SEQUENCE [LARGE SCALE GENOMIC DNA]</scope>
    <source>
        <strain>Kin4-M</strain>
    </source>
</reference>
<proteinExistence type="inferred from homology"/>
<protein>
    <recommendedName>
        <fullName evidence="1">Large ribosomal subunit protein uL11</fullName>
    </recommendedName>
    <alternativeName>
        <fullName evidence="2">50S ribosomal protein L11</fullName>
    </alternativeName>
</protein>
<feature type="chain" id="PRO_0000104440" description="Large ribosomal subunit protein uL11">
    <location>
        <begin position="1"/>
        <end position="160"/>
    </location>
</feature>
<organism>
    <name type="scientific">Nanoarchaeum equitans (strain Kin4-M)</name>
    <dbReference type="NCBI Taxonomy" id="228908"/>
    <lineage>
        <taxon>Archaea</taxon>
        <taxon>Nanobdellota</taxon>
        <taxon>Candidatus Nanoarchaeia</taxon>
        <taxon>Nanoarchaeales</taxon>
        <taxon>Nanoarchaeaceae</taxon>
        <taxon>Nanoarchaeum</taxon>
    </lineage>
</organism>
<evidence type="ECO:0000255" key="1">
    <source>
        <dbReference type="HAMAP-Rule" id="MF_00736"/>
    </source>
</evidence>
<evidence type="ECO:0000305" key="2"/>
<name>RL11_NANEQ</name>
<dbReference type="EMBL" id="AE017199">
    <property type="protein sequence ID" value="AAR38957.1"/>
    <property type="molecule type" value="Genomic_DNA"/>
</dbReference>
<dbReference type="SMR" id="P62446"/>
<dbReference type="STRING" id="228908.NEQ101"/>
<dbReference type="EnsemblBacteria" id="AAR38957">
    <property type="protein sequence ID" value="AAR38957"/>
    <property type="gene ID" value="NEQ101"/>
</dbReference>
<dbReference type="KEGG" id="neq:NEQ101"/>
<dbReference type="HOGENOM" id="CLU_074237_4_0_2"/>
<dbReference type="Proteomes" id="UP000000578">
    <property type="component" value="Chromosome"/>
</dbReference>
<dbReference type="GO" id="GO:0015934">
    <property type="term" value="C:large ribosomal subunit"/>
    <property type="evidence" value="ECO:0007669"/>
    <property type="project" value="TreeGrafter"/>
</dbReference>
<dbReference type="GO" id="GO:0070180">
    <property type="term" value="F:large ribosomal subunit rRNA binding"/>
    <property type="evidence" value="ECO:0007669"/>
    <property type="project" value="UniProtKB-UniRule"/>
</dbReference>
<dbReference type="GO" id="GO:0003735">
    <property type="term" value="F:structural constituent of ribosome"/>
    <property type="evidence" value="ECO:0007669"/>
    <property type="project" value="InterPro"/>
</dbReference>
<dbReference type="GO" id="GO:0006412">
    <property type="term" value="P:translation"/>
    <property type="evidence" value="ECO:0007669"/>
    <property type="project" value="UniProtKB-UniRule"/>
</dbReference>
<dbReference type="CDD" id="cd00349">
    <property type="entry name" value="Ribosomal_L11"/>
    <property type="match status" value="1"/>
</dbReference>
<dbReference type="Gene3D" id="1.10.10.250">
    <property type="entry name" value="Ribosomal protein L11, C-terminal domain"/>
    <property type="match status" value="1"/>
</dbReference>
<dbReference type="Gene3D" id="3.30.1550.10">
    <property type="entry name" value="Ribosomal protein L11/L12, N-terminal domain"/>
    <property type="match status" value="1"/>
</dbReference>
<dbReference type="HAMAP" id="MF_00736">
    <property type="entry name" value="Ribosomal_uL11"/>
    <property type="match status" value="1"/>
</dbReference>
<dbReference type="InterPro" id="IPR000911">
    <property type="entry name" value="Ribosomal_uL11"/>
</dbReference>
<dbReference type="InterPro" id="IPR020783">
    <property type="entry name" value="Ribosomal_uL11_C"/>
</dbReference>
<dbReference type="InterPro" id="IPR036769">
    <property type="entry name" value="Ribosomal_uL11_C_sf"/>
</dbReference>
<dbReference type="InterPro" id="IPR020784">
    <property type="entry name" value="Ribosomal_uL11_N"/>
</dbReference>
<dbReference type="InterPro" id="IPR036796">
    <property type="entry name" value="Ribosomal_uL11_N_sf"/>
</dbReference>
<dbReference type="NCBIfam" id="NF002232">
    <property type="entry name" value="PRK01143.1"/>
    <property type="match status" value="1"/>
</dbReference>
<dbReference type="PANTHER" id="PTHR11661">
    <property type="entry name" value="60S RIBOSOMAL PROTEIN L12"/>
    <property type="match status" value="1"/>
</dbReference>
<dbReference type="PANTHER" id="PTHR11661:SF1">
    <property type="entry name" value="LARGE RIBOSOMAL SUBUNIT PROTEIN UL11M"/>
    <property type="match status" value="1"/>
</dbReference>
<dbReference type="Pfam" id="PF00298">
    <property type="entry name" value="Ribosomal_L11"/>
    <property type="match status" value="1"/>
</dbReference>
<dbReference type="Pfam" id="PF03946">
    <property type="entry name" value="Ribosomal_L11_N"/>
    <property type="match status" value="1"/>
</dbReference>
<dbReference type="SMART" id="SM00649">
    <property type="entry name" value="RL11"/>
    <property type="match status" value="1"/>
</dbReference>
<dbReference type="SUPFAM" id="SSF54747">
    <property type="entry name" value="Ribosomal L11/L12e N-terminal domain"/>
    <property type="match status" value="1"/>
</dbReference>
<dbReference type="SUPFAM" id="SSF46906">
    <property type="entry name" value="Ribosomal protein L11, C-terminal domain"/>
    <property type="match status" value="1"/>
</dbReference>